<gene>
    <name evidence="2" type="primary">xseB</name>
    <name type="ordered locus">c0533</name>
</gene>
<comment type="function">
    <text evidence="2">Bidirectionally degrades single-stranded DNA into large acid-insoluble oligonucleotides, which are then degraded further into small acid-soluble oligonucleotides.</text>
</comment>
<comment type="catalytic activity">
    <reaction evidence="2">
        <text>Exonucleolytic cleavage in either 5'- to 3'- or 3'- to 5'-direction to yield nucleoside 5'-phosphates.</text>
        <dbReference type="EC" id="3.1.11.6"/>
    </reaction>
</comment>
<comment type="subunit">
    <text evidence="2">Heterooligomer composed of large and small subunits.</text>
</comment>
<comment type="subcellular location">
    <subcellularLocation>
        <location evidence="2">Cytoplasm</location>
    </subcellularLocation>
</comment>
<comment type="similarity">
    <text evidence="2 3">Belongs to the XseB family.</text>
</comment>
<feature type="initiator methionine" description="Removed" evidence="1">
    <location>
        <position position="1"/>
    </location>
</feature>
<feature type="chain" id="PRO_0000206947" description="Exodeoxyribonuclease 7 small subunit">
    <location>
        <begin position="2"/>
        <end position="80"/>
    </location>
</feature>
<accession>P0A8H0</accession>
<accession>P22938</accession>
<organism>
    <name type="scientific">Escherichia coli O6:H1 (strain CFT073 / ATCC 700928 / UPEC)</name>
    <dbReference type="NCBI Taxonomy" id="199310"/>
    <lineage>
        <taxon>Bacteria</taxon>
        <taxon>Pseudomonadati</taxon>
        <taxon>Pseudomonadota</taxon>
        <taxon>Gammaproteobacteria</taxon>
        <taxon>Enterobacterales</taxon>
        <taxon>Enterobacteriaceae</taxon>
        <taxon>Escherichia</taxon>
    </lineage>
</organism>
<proteinExistence type="inferred from homology"/>
<reference key="1">
    <citation type="journal article" date="2002" name="Proc. Natl. Acad. Sci. U.S.A.">
        <title>Extensive mosaic structure revealed by the complete genome sequence of uropathogenic Escherichia coli.</title>
        <authorList>
            <person name="Welch R.A."/>
            <person name="Burland V."/>
            <person name="Plunkett G. III"/>
            <person name="Redford P."/>
            <person name="Roesch P."/>
            <person name="Rasko D."/>
            <person name="Buckles E.L."/>
            <person name="Liou S.-R."/>
            <person name="Boutin A."/>
            <person name="Hackett J."/>
            <person name="Stroud D."/>
            <person name="Mayhew G.F."/>
            <person name="Rose D.J."/>
            <person name="Zhou S."/>
            <person name="Schwartz D.C."/>
            <person name="Perna N.T."/>
            <person name="Mobley H.L.T."/>
            <person name="Donnenberg M.S."/>
            <person name="Blattner F.R."/>
        </authorList>
    </citation>
    <scope>NUCLEOTIDE SEQUENCE [LARGE SCALE GENOMIC DNA]</scope>
    <source>
        <strain>CFT073 / ATCC 700928 / UPEC</strain>
    </source>
</reference>
<protein>
    <recommendedName>
        <fullName evidence="2">Exodeoxyribonuclease 7 small subunit</fullName>
        <ecNumber evidence="2">3.1.11.6</ecNumber>
    </recommendedName>
    <alternativeName>
        <fullName evidence="2">Exodeoxyribonuclease VII small subunit</fullName>
        <shortName evidence="2">Exonuclease VII small subunit</shortName>
    </alternativeName>
</protein>
<sequence length="80" mass="8952">MPKKNEAPASFEKALSELEQIVTRLESGDLPLEEALNEFERGVQLARQGQAKLQQAEQRVQILLSDNEDASLTPFTPDNE</sequence>
<name>EX7S_ECOL6</name>
<keyword id="KW-0963">Cytoplasm</keyword>
<keyword id="KW-0269">Exonuclease</keyword>
<keyword id="KW-0378">Hydrolase</keyword>
<keyword id="KW-0540">Nuclease</keyword>
<keyword id="KW-1185">Reference proteome</keyword>
<dbReference type="EC" id="3.1.11.6" evidence="2"/>
<dbReference type="EMBL" id="AE014075">
    <property type="protein sequence ID" value="AAN79011.1"/>
    <property type="molecule type" value="Genomic_DNA"/>
</dbReference>
<dbReference type="RefSeq" id="WP_001124935.1">
    <property type="nucleotide sequence ID" value="NZ_CP051263.1"/>
</dbReference>
<dbReference type="SMR" id="P0A8H0"/>
<dbReference type="STRING" id="199310.c0533"/>
<dbReference type="GeneID" id="75202844"/>
<dbReference type="KEGG" id="ecc:c0533"/>
<dbReference type="eggNOG" id="COG1722">
    <property type="taxonomic scope" value="Bacteria"/>
</dbReference>
<dbReference type="HOGENOM" id="CLU_145918_3_3_6"/>
<dbReference type="BioCyc" id="ECOL199310:C0533-MONOMER"/>
<dbReference type="Proteomes" id="UP000001410">
    <property type="component" value="Chromosome"/>
</dbReference>
<dbReference type="GO" id="GO:0005829">
    <property type="term" value="C:cytosol"/>
    <property type="evidence" value="ECO:0007669"/>
    <property type="project" value="TreeGrafter"/>
</dbReference>
<dbReference type="GO" id="GO:0009318">
    <property type="term" value="C:exodeoxyribonuclease VII complex"/>
    <property type="evidence" value="ECO:0007669"/>
    <property type="project" value="InterPro"/>
</dbReference>
<dbReference type="GO" id="GO:0008855">
    <property type="term" value="F:exodeoxyribonuclease VII activity"/>
    <property type="evidence" value="ECO:0007669"/>
    <property type="project" value="UniProtKB-UniRule"/>
</dbReference>
<dbReference type="GO" id="GO:0006308">
    <property type="term" value="P:DNA catabolic process"/>
    <property type="evidence" value="ECO:0007669"/>
    <property type="project" value="UniProtKB-UniRule"/>
</dbReference>
<dbReference type="FunFam" id="1.10.287.1040:FF:000001">
    <property type="entry name" value="Exodeoxyribonuclease 7 small subunit"/>
    <property type="match status" value="1"/>
</dbReference>
<dbReference type="Gene3D" id="1.10.287.1040">
    <property type="entry name" value="Exonuclease VII, small subunit"/>
    <property type="match status" value="1"/>
</dbReference>
<dbReference type="HAMAP" id="MF_00337">
    <property type="entry name" value="Exonuc_7_S"/>
    <property type="match status" value="1"/>
</dbReference>
<dbReference type="InterPro" id="IPR003761">
    <property type="entry name" value="Exonuc_VII_S"/>
</dbReference>
<dbReference type="InterPro" id="IPR037004">
    <property type="entry name" value="Exonuc_VII_ssu_sf"/>
</dbReference>
<dbReference type="NCBIfam" id="NF002137">
    <property type="entry name" value="PRK00977.1-1"/>
    <property type="match status" value="1"/>
</dbReference>
<dbReference type="NCBIfam" id="NF002140">
    <property type="entry name" value="PRK00977.1-4"/>
    <property type="match status" value="1"/>
</dbReference>
<dbReference type="NCBIfam" id="TIGR01280">
    <property type="entry name" value="xseB"/>
    <property type="match status" value="1"/>
</dbReference>
<dbReference type="PANTHER" id="PTHR34137">
    <property type="entry name" value="EXODEOXYRIBONUCLEASE 7 SMALL SUBUNIT"/>
    <property type="match status" value="1"/>
</dbReference>
<dbReference type="PANTHER" id="PTHR34137:SF1">
    <property type="entry name" value="EXODEOXYRIBONUCLEASE 7 SMALL SUBUNIT"/>
    <property type="match status" value="1"/>
</dbReference>
<dbReference type="Pfam" id="PF02609">
    <property type="entry name" value="Exonuc_VII_S"/>
    <property type="match status" value="1"/>
</dbReference>
<dbReference type="PIRSF" id="PIRSF006488">
    <property type="entry name" value="Exonuc_VII_S"/>
    <property type="match status" value="1"/>
</dbReference>
<dbReference type="SUPFAM" id="SSF116842">
    <property type="entry name" value="XseB-like"/>
    <property type="match status" value="1"/>
</dbReference>
<evidence type="ECO:0000250" key="1"/>
<evidence type="ECO:0000255" key="2">
    <source>
        <dbReference type="HAMAP-Rule" id="MF_00337"/>
    </source>
</evidence>
<evidence type="ECO:0000305" key="3"/>